<proteinExistence type="inferred from homology"/>
<organism>
    <name type="scientific">Dictyoglomus thermophilum (strain ATCC 35947 / DSM 3960 / H-6-12)</name>
    <dbReference type="NCBI Taxonomy" id="309799"/>
    <lineage>
        <taxon>Bacteria</taxon>
        <taxon>Pseudomonadati</taxon>
        <taxon>Dictyoglomota</taxon>
        <taxon>Dictyoglomia</taxon>
        <taxon>Dictyoglomales</taxon>
        <taxon>Dictyoglomaceae</taxon>
        <taxon>Dictyoglomus</taxon>
    </lineage>
</organism>
<evidence type="ECO:0000255" key="1">
    <source>
        <dbReference type="HAMAP-Rule" id="MF_01367"/>
    </source>
</evidence>
<evidence type="ECO:0000305" key="2"/>
<feature type="chain" id="PRO_1000144260" description="Large ribosomal subunit protein uL14">
    <location>
        <begin position="1"/>
        <end position="120"/>
    </location>
</feature>
<name>RL14_DICT6</name>
<reference key="1">
    <citation type="journal article" date="2014" name="Genome Announc.">
        <title>Complete Genome Sequence of the Extreme Thermophile Dictyoglomus thermophilum H-6-12.</title>
        <authorList>
            <person name="Coil D.A."/>
            <person name="Badger J.H."/>
            <person name="Forberger H.C."/>
            <person name="Riggs F."/>
            <person name="Madupu R."/>
            <person name="Fedorova N."/>
            <person name="Ward N."/>
            <person name="Robb F.T."/>
            <person name="Eisen J.A."/>
        </authorList>
    </citation>
    <scope>NUCLEOTIDE SEQUENCE [LARGE SCALE GENOMIC DNA]</scope>
    <source>
        <strain>ATCC 35947 / DSM 3960 / H-6-12</strain>
    </source>
</reference>
<protein>
    <recommendedName>
        <fullName evidence="1">Large ribosomal subunit protein uL14</fullName>
    </recommendedName>
    <alternativeName>
        <fullName evidence="2">50S ribosomal protein L14</fullName>
    </alternativeName>
</protein>
<sequence>MIMPQTRLVVADNTGAKEIMCFRILGKKRVAQVGDIIVASVKEAVPRSNIKKGDVVYAVVIRTKRTIKRKDGSCVRFDDNAAVIIDKEGNPKGTRVFGPVARELRDKNFMKIISLATEVI</sequence>
<comment type="function">
    <text evidence="1">Binds to 23S rRNA. Forms part of two intersubunit bridges in the 70S ribosome.</text>
</comment>
<comment type="subunit">
    <text evidence="1">Part of the 50S ribosomal subunit. Forms a cluster with proteins L3 and L19. In the 70S ribosome, L14 and L19 interact and together make contacts with the 16S rRNA in bridges B5 and B8.</text>
</comment>
<comment type="similarity">
    <text evidence="1">Belongs to the universal ribosomal protein uL14 family.</text>
</comment>
<keyword id="KW-0687">Ribonucleoprotein</keyword>
<keyword id="KW-0689">Ribosomal protein</keyword>
<keyword id="KW-0694">RNA-binding</keyword>
<keyword id="KW-0699">rRNA-binding</keyword>
<dbReference type="EMBL" id="CP001146">
    <property type="protein sequence ID" value="ACI18835.1"/>
    <property type="molecule type" value="Genomic_DNA"/>
</dbReference>
<dbReference type="RefSeq" id="WP_012547467.1">
    <property type="nucleotide sequence ID" value="NC_011297.1"/>
</dbReference>
<dbReference type="SMR" id="B5YDV3"/>
<dbReference type="STRING" id="309799.DICTH_0847"/>
<dbReference type="PaxDb" id="309799-DICTH_0847"/>
<dbReference type="KEGG" id="dth:DICTH_0847"/>
<dbReference type="eggNOG" id="COG0093">
    <property type="taxonomic scope" value="Bacteria"/>
</dbReference>
<dbReference type="HOGENOM" id="CLU_095071_2_1_0"/>
<dbReference type="OrthoDB" id="9806379at2"/>
<dbReference type="Proteomes" id="UP000001733">
    <property type="component" value="Chromosome"/>
</dbReference>
<dbReference type="GO" id="GO:0022625">
    <property type="term" value="C:cytosolic large ribosomal subunit"/>
    <property type="evidence" value="ECO:0007669"/>
    <property type="project" value="TreeGrafter"/>
</dbReference>
<dbReference type="GO" id="GO:0070180">
    <property type="term" value="F:large ribosomal subunit rRNA binding"/>
    <property type="evidence" value="ECO:0007669"/>
    <property type="project" value="TreeGrafter"/>
</dbReference>
<dbReference type="GO" id="GO:0003735">
    <property type="term" value="F:structural constituent of ribosome"/>
    <property type="evidence" value="ECO:0007669"/>
    <property type="project" value="InterPro"/>
</dbReference>
<dbReference type="GO" id="GO:0006412">
    <property type="term" value="P:translation"/>
    <property type="evidence" value="ECO:0007669"/>
    <property type="project" value="UniProtKB-UniRule"/>
</dbReference>
<dbReference type="CDD" id="cd00337">
    <property type="entry name" value="Ribosomal_uL14"/>
    <property type="match status" value="1"/>
</dbReference>
<dbReference type="FunFam" id="2.40.150.20:FF:000001">
    <property type="entry name" value="50S ribosomal protein L14"/>
    <property type="match status" value="1"/>
</dbReference>
<dbReference type="Gene3D" id="2.40.150.20">
    <property type="entry name" value="Ribosomal protein L14"/>
    <property type="match status" value="1"/>
</dbReference>
<dbReference type="HAMAP" id="MF_01367">
    <property type="entry name" value="Ribosomal_uL14"/>
    <property type="match status" value="1"/>
</dbReference>
<dbReference type="InterPro" id="IPR000218">
    <property type="entry name" value="Ribosomal_uL14"/>
</dbReference>
<dbReference type="InterPro" id="IPR005745">
    <property type="entry name" value="Ribosomal_uL14_bac-type"/>
</dbReference>
<dbReference type="InterPro" id="IPR019972">
    <property type="entry name" value="Ribosomal_uL14_CS"/>
</dbReference>
<dbReference type="InterPro" id="IPR036853">
    <property type="entry name" value="Ribosomal_uL14_sf"/>
</dbReference>
<dbReference type="NCBIfam" id="TIGR01067">
    <property type="entry name" value="rplN_bact"/>
    <property type="match status" value="1"/>
</dbReference>
<dbReference type="PANTHER" id="PTHR11761">
    <property type="entry name" value="50S/60S RIBOSOMAL PROTEIN L14/L23"/>
    <property type="match status" value="1"/>
</dbReference>
<dbReference type="PANTHER" id="PTHR11761:SF3">
    <property type="entry name" value="LARGE RIBOSOMAL SUBUNIT PROTEIN UL14M"/>
    <property type="match status" value="1"/>
</dbReference>
<dbReference type="Pfam" id="PF00238">
    <property type="entry name" value="Ribosomal_L14"/>
    <property type="match status" value="1"/>
</dbReference>
<dbReference type="SMART" id="SM01374">
    <property type="entry name" value="Ribosomal_L14"/>
    <property type="match status" value="1"/>
</dbReference>
<dbReference type="SUPFAM" id="SSF50193">
    <property type="entry name" value="Ribosomal protein L14"/>
    <property type="match status" value="1"/>
</dbReference>
<dbReference type="PROSITE" id="PS00049">
    <property type="entry name" value="RIBOSOMAL_L14"/>
    <property type="match status" value="1"/>
</dbReference>
<accession>B5YDV3</accession>
<gene>
    <name evidence="1" type="primary">rplN</name>
    <name type="ordered locus">DICTH_0847</name>
</gene>